<dbReference type="EMBL" id="AE016826">
    <property type="protein sequence ID" value="AAO26756.1"/>
    <property type="molecule type" value="Genomic_DNA"/>
</dbReference>
<dbReference type="RefSeq" id="WP_011091157.1">
    <property type="nucleotide sequence ID" value="NC_004545.1"/>
</dbReference>
<dbReference type="SMR" id="P59567"/>
<dbReference type="STRING" id="224915.bbp_012"/>
<dbReference type="KEGG" id="bab:bbp_012"/>
<dbReference type="eggNOG" id="COG0593">
    <property type="taxonomic scope" value="Bacteria"/>
</dbReference>
<dbReference type="HOGENOM" id="CLU_026910_0_1_6"/>
<dbReference type="OrthoDB" id="9807019at2"/>
<dbReference type="Proteomes" id="UP000000601">
    <property type="component" value="Chromosome"/>
</dbReference>
<dbReference type="GO" id="GO:0005737">
    <property type="term" value="C:cytoplasm"/>
    <property type="evidence" value="ECO:0007669"/>
    <property type="project" value="UniProtKB-SubCell"/>
</dbReference>
<dbReference type="GO" id="GO:0005886">
    <property type="term" value="C:plasma membrane"/>
    <property type="evidence" value="ECO:0007669"/>
    <property type="project" value="TreeGrafter"/>
</dbReference>
<dbReference type="GO" id="GO:0005524">
    <property type="term" value="F:ATP binding"/>
    <property type="evidence" value="ECO:0007669"/>
    <property type="project" value="UniProtKB-UniRule"/>
</dbReference>
<dbReference type="GO" id="GO:0016887">
    <property type="term" value="F:ATP hydrolysis activity"/>
    <property type="evidence" value="ECO:0007669"/>
    <property type="project" value="InterPro"/>
</dbReference>
<dbReference type="GO" id="GO:0003688">
    <property type="term" value="F:DNA replication origin binding"/>
    <property type="evidence" value="ECO:0007669"/>
    <property type="project" value="UniProtKB-UniRule"/>
</dbReference>
<dbReference type="GO" id="GO:0008289">
    <property type="term" value="F:lipid binding"/>
    <property type="evidence" value="ECO:0007669"/>
    <property type="project" value="UniProtKB-KW"/>
</dbReference>
<dbReference type="GO" id="GO:0006270">
    <property type="term" value="P:DNA replication initiation"/>
    <property type="evidence" value="ECO:0007669"/>
    <property type="project" value="UniProtKB-UniRule"/>
</dbReference>
<dbReference type="GO" id="GO:0006275">
    <property type="term" value="P:regulation of DNA replication"/>
    <property type="evidence" value="ECO:0007669"/>
    <property type="project" value="UniProtKB-UniRule"/>
</dbReference>
<dbReference type="CDD" id="cd00009">
    <property type="entry name" value="AAA"/>
    <property type="match status" value="1"/>
</dbReference>
<dbReference type="CDD" id="cd06571">
    <property type="entry name" value="Bac_DnaA_C"/>
    <property type="match status" value="1"/>
</dbReference>
<dbReference type="Gene3D" id="1.10.1750.10">
    <property type="match status" value="1"/>
</dbReference>
<dbReference type="Gene3D" id="1.10.8.60">
    <property type="match status" value="1"/>
</dbReference>
<dbReference type="Gene3D" id="3.30.300.180">
    <property type="match status" value="1"/>
</dbReference>
<dbReference type="Gene3D" id="3.40.50.300">
    <property type="entry name" value="P-loop containing nucleotide triphosphate hydrolases"/>
    <property type="match status" value="1"/>
</dbReference>
<dbReference type="HAMAP" id="MF_00377">
    <property type="entry name" value="DnaA_bact"/>
    <property type="match status" value="1"/>
</dbReference>
<dbReference type="InterPro" id="IPR003593">
    <property type="entry name" value="AAA+_ATPase"/>
</dbReference>
<dbReference type="InterPro" id="IPR001957">
    <property type="entry name" value="Chromosome_initiator_DnaA"/>
</dbReference>
<dbReference type="InterPro" id="IPR020591">
    <property type="entry name" value="Chromosome_initiator_DnaA-like"/>
</dbReference>
<dbReference type="InterPro" id="IPR018312">
    <property type="entry name" value="Chromosome_initiator_DnaA_CS"/>
</dbReference>
<dbReference type="InterPro" id="IPR013159">
    <property type="entry name" value="DnaA_C"/>
</dbReference>
<dbReference type="InterPro" id="IPR013317">
    <property type="entry name" value="DnaA_dom"/>
</dbReference>
<dbReference type="InterPro" id="IPR024633">
    <property type="entry name" value="DnaA_N_dom"/>
</dbReference>
<dbReference type="InterPro" id="IPR038454">
    <property type="entry name" value="DnaA_N_sf"/>
</dbReference>
<dbReference type="InterPro" id="IPR027417">
    <property type="entry name" value="P-loop_NTPase"/>
</dbReference>
<dbReference type="InterPro" id="IPR010921">
    <property type="entry name" value="Trp_repressor/repl_initiator"/>
</dbReference>
<dbReference type="NCBIfam" id="TIGR00362">
    <property type="entry name" value="DnaA"/>
    <property type="match status" value="1"/>
</dbReference>
<dbReference type="PANTHER" id="PTHR30050">
    <property type="entry name" value="CHROMOSOMAL REPLICATION INITIATOR PROTEIN DNAA"/>
    <property type="match status" value="1"/>
</dbReference>
<dbReference type="PANTHER" id="PTHR30050:SF2">
    <property type="entry name" value="CHROMOSOMAL REPLICATION INITIATOR PROTEIN DNAA"/>
    <property type="match status" value="1"/>
</dbReference>
<dbReference type="Pfam" id="PF00308">
    <property type="entry name" value="Bac_DnaA"/>
    <property type="match status" value="1"/>
</dbReference>
<dbReference type="Pfam" id="PF08299">
    <property type="entry name" value="Bac_DnaA_C"/>
    <property type="match status" value="1"/>
</dbReference>
<dbReference type="Pfam" id="PF11638">
    <property type="entry name" value="DnaA_N"/>
    <property type="match status" value="1"/>
</dbReference>
<dbReference type="PRINTS" id="PR00051">
    <property type="entry name" value="DNAA"/>
</dbReference>
<dbReference type="SMART" id="SM00382">
    <property type="entry name" value="AAA"/>
    <property type="match status" value="1"/>
</dbReference>
<dbReference type="SMART" id="SM00760">
    <property type="entry name" value="Bac_DnaA_C"/>
    <property type="match status" value="1"/>
</dbReference>
<dbReference type="SUPFAM" id="SSF52540">
    <property type="entry name" value="P-loop containing nucleoside triphosphate hydrolases"/>
    <property type="match status" value="1"/>
</dbReference>
<dbReference type="SUPFAM" id="SSF48295">
    <property type="entry name" value="TrpR-like"/>
    <property type="match status" value="1"/>
</dbReference>
<dbReference type="PROSITE" id="PS01008">
    <property type="entry name" value="DNAA"/>
    <property type="match status" value="1"/>
</dbReference>
<reference key="1">
    <citation type="journal article" date="2003" name="Proc. Natl. Acad. Sci. U.S.A.">
        <title>Reductive genome evolution in Buchnera aphidicola.</title>
        <authorList>
            <person name="van Ham R.C.H.J."/>
            <person name="Kamerbeek J."/>
            <person name="Palacios C."/>
            <person name="Rausell C."/>
            <person name="Abascal F."/>
            <person name="Bastolla U."/>
            <person name="Fernandez J.M."/>
            <person name="Jimenez L."/>
            <person name="Postigo M."/>
            <person name="Silva F.J."/>
            <person name="Tamames J."/>
            <person name="Viguera E."/>
            <person name="Latorre A."/>
            <person name="Valencia A."/>
            <person name="Moran F."/>
            <person name="Moya A."/>
        </authorList>
    </citation>
    <scope>NUCLEOTIDE SEQUENCE [LARGE SCALE GENOMIC DNA]</scope>
    <source>
        <strain>Bp</strain>
    </source>
</reference>
<name>DNAA_BUCBP</name>
<feature type="chain" id="PRO_0000114150" description="Chromosomal replication initiator protein DnaA">
    <location>
        <begin position="1"/>
        <end position="457"/>
    </location>
</feature>
<feature type="region of interest" description="Domain I, interacts with DnaA modulators" evidence="1">
    <location>
        <begin position="1"/>
        <end position="71"/>
    </location>
</feature>
<feature type="region of interest" description="Domain II" evidence="1">
    <location>
        <begin position="71"/>
        <end position="119"/>
    </location>
</feature>
<feature type="region of interest" description="Domain III, AAA+ region" evidence="1">
    <location>
        <begin position="120"/>
        <end position="337"/>
    </location>
</feature>
<feature type="region of interest" description="Domain IV, binds dsDNA" evidence="1">
    <location>
        <begin position="338"/>
        <end position="457"/>
    </location>
</feature>
<feature type="binding site" evidence="1">
    <location>
        <position position="165"/>
    </location>
    <ligand>
        <name>ATP</name>
        <dbReference type="ChEBI" id="CHEBI:30616"/>
    </ligand>
</feature>
<feature type="binding site" evidence="1">
    <location>
        <position position="167"/>
    </location>
    <ligand>
        <name>ATP</name>
        <dbReference type="ChEBI" id="CHEBI:30616"/>
    </ligand>
</feature>
<feature type="binding site" evidence="1">
    <location>
        <position position="168"/>
    </location>
    <ligand>
        <name>ATP</name>
        <dbReference type="ChEBI" id="CHEBI:30616"/>
    </ligand>
</feature>
<feature type="binding site" evidence="1">
    <location>
        <position position="169"/>
    </location>
    <ligand>
        <name>ATP</name>
        <dbReference type="ChEBI" id="CHEBI:30616"/>
    </ligand>
</feature>
<proteinExistence type="inferred from homology"/>
<keyword id="KW-0067">ATP-binding</keyword>
<keyword id="KW-0963">Cytoplasm</keyword>
<keyword id="KW-0235">DNA replication</keyword>
<keyword id="KW-0238">DNA-binding</keyword>
<keyword id="KW-0446">Lipid-binding</keyword>
<keyword id="KW-0547">Nucleotide-binding</keyword>
<keyword id="KW-1185">Reference proteome</keyword>
<gene>
    <name evidence="1" type="primary">dnaA</name>
    <name type="ordered locus">bbp_012</name>
</gene>
<organism>
    <name type="scientific">Buchnera aphidicola subsp. Baizongia pistaciae (strain Bp)</name>
    <dbReference type="NCBI Taxonomy" id="224915"/>
    <lineage>
        <taxon>Bacteria</taxon>
        <taxon>Pseudomonadati</taxon>
        <taxon>Pseudomonadota</taxon>
        <taxon>Gammaproteobacteria</taxon>
        <taxon>Enterobacterales</taxon>
        <taxon>Erwiniaceae</taxon>
        <taxon>Buchnera</taxon>
    </lineage>
</organism>
<comment type="function">
    <text evidence="1">Plays an essential role in the initiation and regulation of chromosomal replication. ATP-DnaA binds to the origin of replication (oriC) to initiate formation of the DNA replication initiation complex once per cell cycle. Binds the DnaA box (a 9 base pair repeat at the origin) and separates the double-stranded (ds)DNA. Forms a right-handed helical filament on oriC DNA; dsDNA binds to the exterior of the filament while single-stranded (ss)DNA is stabiized in the filament's interior. The ATP-DnaA-oriC complex binds and stabilizes one strand of the AT-rich DNA unwinding element (DUE), permitting loading of DNA polymerase. After initiation quickly degrades to an ADP-DnaA complex that is not apt for DNA replication. Binds acidic phospholipids.</text>
</comment>
<comment type="subunit">
    <text evidence="1">Oligomerizes as a right-handed, spiral filament on DNA at oriC.</text>
</comment>
<comment type="subcellular location">
    <subcellularLocation>
        <location evidence="1">Cytoplasm</location>
    </subcellularLocation>
</comment>
<comment type="domain">
    <text evidence="1">Domain I is involved in oligomerization and binding regulators, domain II is flexibile and of varying length in different bacteria, domain III forms the AAA+ region, while domain IV binds dsDNA.</text>
</comment>
<comment type="similarity">
    <text evidence="1">Belongs to the DnaA family.</text>
</comment>
<sequence length="457" mass="53366">MSPSIWEKCLKYLQNKLSPIEFSMWIRPLKAEFKKNILILYAPNEFSFNWIKDNYIENLKKLLKNFCNINTTPTLMLKICKPKIIQKKFFNELTLKKNILNSKLTYNVNTKLSNIIYSSEINTNYTFQNFTKGQSNQLAFKTIYKIAHNPGKNYFNPLFLYGKSGLGKTHLLHAVANTILKYKNTIKIIYINSENFIQNMITSLKNNTIEEFKKYYRSVNTLLIDDIQFFAYKKHSQEELFHTINALLNRNQQIIITSDQFPQKIHGIETRLKSRFECGLTIRIDPPDLNTRTKILIKKSHIYDINLSYKVAFFIAKNLKSNIRELEGALNKILANSDSKKKIITINFAYKTLQELFSLPKKSITIKNIQKVVSNYYHITIINLLSQCRLKSIVKPRQIAMAISKKLTNKSLSEIGREFNGRNHATVLYACKKIKKLQEKNNNIKKDFLTLLKILSS</sequence>
<protein>
    <recommendedName>
        <fullName evidence="1">Chromosomal replication initiator protein DnaA</fullName>
    </recommendedName>
</protein>
<evidence type="ECO:0000255" key="1">
    <source>
        <dbReference type="HAMAP-Rule" id="MF_00377"/>
    </source>
</evidence>
<accession>P59567</accession>